<gene>
    <name evidence="1" type="primary">gcvT</name>
    <name type="ordered locus">XCC2877</name>
</gene>
<keyword id="KW-0032">Aminotransferase</keyword>
<keyword id="KW-1185">Reference proteome</keyword>
<keyword id="KW-0808">Transferase</keyword>
<reference key="1">
    <citation type="journal article" date="2002" name="Nature">
        <title>Comparison of the genomes of two Xanthomonas pathogens with differing host specificities.</title>
        <authorList>
            <person name="da Silva A.C.R."/>
            <person name="Ferro J.A."/>
            <person name="Reinach F.C."/>
            <person name="Farah C.S."/>
            <person name="Furlan L.R."/>
            <person name="Quaggio R.B."/>
            <person name="Monteiro-Vitorello C.B."/>
            <person name="Van Sluys M.A."/>
            <person name="Almeida N.F. Jr."/>
            <person name="Alves L.M.C."/>
            <person name="do Amaral A.M."/>
            <person name="Bertolini M.C."/>
            <person name="Camargo L.E.A."/>
            <person name="Camarotte G."/>
            <person name="Cannavan F."/>
            <person name="Cardozo J."/>
            <person name="Chambergo F."/>
            <person name="Ciapina L.P."/>
            <person name="Cicarelli R.M.B."/>
            <person name="Coutinho L.L."/>
            <person name="Cursino-Santos J.R."/>
            <person name="El-Dorry H."/>
            <person name="Faria J.B."/>
            <person name="Ferreira A.J.S."/>
            <person name="Ferreira R.C.C."/>
            <person name="Ferro M.I.T."/>
            <person name="Formighieri E.F."/>
            <person name="Franco M.C."/>
            <person name="Greggio C.C."/>
            <person name="Gruber A."/>
            <person name="Katsuyama A.M."/>
            <person name="Kishi L.T."/>
            <person name="Leite R.P."/>
            <person name="Lemos E.G.M."/>
            <person name="Lemos M.V.F."/>
            <person name="Locali E.C."/>
            <person name="Machado M.A."/>
            <person name="Madeira A.M.B.N."/>
            <person name="Martinez-Rossi N.M."/>
            <person name="Martins E.C."/>
            <person name="Meidanis J."/>
            <person name="Menck C.F.M."/>
            <person name="Miyaki C.Y."/>
            <person name="Moon D.H."/>
            <person name="Moreira L.M."/>
            <person name="Novo M.T.M."/>
            <person name="Okura V.K."/>
            <person name="Oliveira M.C."/>
            <person name="Oliveira V.R."/>
            <person name="Pereira H.A."/>
            <person name="Rossi A."/>
            <person name="Sena J.A.D."/>
            <person name="Silva C."/>
            <person name="de Souza R.F."/>
            <person name="Spinola L.A.F."/>
            <person name="Takita M.A."/>
            <person name="Tamura R.E."/>
            <person name="Teixeira E.C."/>
            <person name="Tezza R.I.D."/>
            <person name="Trindade dos Santos M."/>
            <person name="Truffi D."/>
            <person name="Tsai S.M."/>
            <person name="White F.F."/>
            <person name="Setubal J.C."/>
            <person name="Kitajima J.P."/>
        </authorList>
    </citation>
    <scope>NUCLEOTIDE SEQUENCE [LARGE SCALE GENOMIC DNA]</scope>
    <source>
        <strain>ATCC 33913 / DSM 3586 / NCPPB 528 / LMG 568 / P 25</strain>
    </source>
</reference>
<feature type="chain" id="PRO_0000122615" description="Aminomethyltransferase">
    <location>
        <begin position="1"/>
        <end position="369"/>
    </location>
</feature>
<evidence type="ECO:0000255" key="1">
    <source>
        <dbReference type="HAMAP-Rule" id="MF_00259"/>
    </source>
</evidence>
<accession>Q8P6T8</accession>
<name>GCST_XANCP</name>
<protein>
    <recommendedName>
        <fullName evidence="1">Aminomethyltransferase</fullName>
        <ecNumber evidence="1">2.1.2.10</ecNumber>
    </recommendedName>
    <alternativeName>
        <fullName evidence="1">Glycine cleavage system T protein</fullName>
    </alternativeName>
</protein>
<sequence>MTQKTILNDTHRALGAKMVDFGGWDMPIHYGSQIDEHHQVRRDAGMFDVSHMTVVDLHGVRVREFLRYLLANSVDKLKVSGKALYTCMLNPQGGVIDDLIVYFMQEEFFRLVVNAATRDKDLQWIGEQAARFEVRVKERADFAMIAVQGPNARSKVIDLLDPADASAASKLGRFAALQTRTRDGVALFLARTGYTGEDGFEIVLPQADAVAFWNALLAHGVAPAGLGARDTLRLEAGMNLYGQDMDDNVTPYEAALAWTITLDEGRDFIGRSVLESQKAQGAPRQMIGVVMDEKGVLRHGQKVLSAGGEGEILSGTFSPTLGKAIAFARVPAGSIDDLRVDIRGKQVPLRAVKFPFVRDGQAQPGVLGA</sequence>
<organism>
    <name type="scientific">Xanthomonas campestris pv. campestris (strain ATCC 33913 / DSM 3586 / NCPPB 528 / LMG 568 / P 25)</name>
    <dbReference type="NCBI Taxonomy" id="190485"/>
    <lineage>
        <taxon>Bacteria</taxon>
        <taxon>Pseudomonadati</taxon>
        <taxon>Pseudomonadota</taxon>
        <taxon>Gammaproteobacteria</taxon>
        <taxon>Lysobacterales</taxon>
        <taxon>Lysobacteraceae</taxon>
        <taxon>Xanthomonas</taxon>
    </lineage>
</organism>
<dbReference type="EC" id="2.1.2.10" evidence="1"/>
<dbReference type="EMBL" id="AE008922">
    <property type="protein sequence ID" value="AAM42149.1"/>
    <property type="molecule type" value="Genomic_DNA"/>
</dbReference>
<dbReference type="RefSeq" id="NP_638225.1">
    <property type="nucleotide sequence ID" value="NC_003902.1"/>
</dbReference>
<dbReference type="RefSeq" id="WP_011038002.1">
    <property type="nucleotide sequence ID" value="NC_003902.1"/>
</dbReference>
<dbReference type="SMR" id="Q8P6T8"/>
<dbReference type="STRING" id="190485.XCC2877"/>
<dbReference type="EnsemblBacteria" id="AAM42149">
    <property type="protein sequence ID" value="AAM42149"/>
    <property type="gene ID" value="XCC2877"/>
</dbReference>
<dbReference type="KEGG" id="xcc:XCC2877"/>
<dbReference type="PATRIC" id="fig|190485.4.peg.3079"/>
<dbReference type="eggNOG" id="COG0404">
    <property type="taxonomic scope" value="Bacteria"/>
</dbReference>
<dbReference type="HOGENOM" id="CLU_007884_10_2_6"/>
<dbReference type="OrthoDB" id="9774591at2"/>
<dbReference type="Proteomes" id="UP000001010">
    <property type="component" value="Chromosome"/>
</dbReference>
<dbReference type="GO" id="GO:0005829">
    <property type="term" value="C:cytosol"/>
    <property type="evidence" value="ECO:0000318"/>
    <property type="project" value="GO_Central"/>
</dbReference>
<dbReference type="GO" id="GO:0005960">
    <property type="term" value="C:glycine cleavage complex"/>
    <property type="evidence" value="ECO:0007669"/>
    <property type="project" value="InterPro"/>
</dbReference>
<dbReference type="GO" id="GO:0004047">
    <property type="term" value="F:aminomethyltransferase activity"/>
    <property type="evidence" value="ECO:0007669"/>
    <property type="project" value="UniProtKB-UniRule"/>
</dbReference>
<dbReference type="GO" id="GO:0008483">
    <property type="term" value="F:transaminase activity"/>
    <property type="evidence" value="ECO:0007669"/>
    <property type="project" value="UniProtKB-KW"/>
</dbReference>
<dbReference type="GO" id="GO:0019464">
    <property type="term" value="P:glycine decarboxylation via glycine cleavage system"/>
    <property type="evidence" value="ECO:0007669"/>
    <property type="project" value="UniProtKB-UniRule"/>
</dbReference>
<dbReference type="FunFam" id="2.40.30.110:FF:000001">
    <property type="entry name" value="Aminomethyltransferase"/>
    <property type="match status" value="1"/>
</dbReference>
<dbReference type="FunFam" id="3.30.70.1400:FF:000001">
    <property type="entry name" value="Aminomethyltransferase"/>
    <property type="match status" value="1"/>
</dbReference>
<dbReference type="FunFam" id="4.10.1250.10:FF:000001">
    <property type="entry name" value="Aminomethyltransferase"/>
    <property type="match status" value="1"/>
</dbReference>
<dbReference type="Gene3D" id="2.40.30.110">
    <property type="entry name" value="Aminomethyltransferase beta-barrel domains"/>
    <property type="match status" value="1"/>
</dbReference>
<dbReference type="Gene3D" id="3.30.70.1400">
    <property type="entry name" value="Aminomethyltransferase beta-barrel domains"/>
    <property type="match status" value="1"/>
</dbReference>
<dbReference type="Gene3D" id="4.10.1250.10">
    <property type="entry name" value="Aminomethyltransferase fragment"/>
    <property type="match status" value="1"/>
</dbReference>
<dbReference type="Gene3D" id="3.30.1360.120">
    <property type="entry name" value="Probable tRNA modification gtpase trme, domain 1"/>
    <property type="match status" value="1"/>
</dbReference>
<dbReference type="HAMAP" id="MF_00259">
    <property type="entry name" value="GcvT"/>
    <property type="match status" value="1"/>
</dbReference>
<dbReference type="InterPro" id="IPR006223">
    <property type="entry name" value="GCS_T"/>
</dbReference>
<dbReference type="InterPro" id="IPR022903">
    <property type="entry name" value="GCS_T_bac"/>
</dbReference>
<dbReference type="InterPro" id="IPR013977">
    <property type="entry name" value="GCST_C"/>
</dbReference>
<dbReference type="InterPro" id="IPR006222">
    <property type="entry name" value="GCV_T_N"/>
</dbReference>
<dbReference type="InterPro" id="IPR028896">
    <property type="entry name" value="GcvT/YgfZ/DmdA"/>
</dbReference>
<dbReference type="InterPro" id="IPR029043">
    <property type="entry name" value="GcvT/YgfZ_C"/>
</dbReference>
<dbReference type="InterPro" id="IPR027266">
    <property type="entry name" value="TrmE/GcvT_dom1"/>
</dbReference>
<dbReference type="NCBIfam" id="TIGR00528">
    <property type="entry name" value="gcvT"/>
    <property type="match status" value="1"/>
</dbReference>
<dbReference type="NCBIfam" id="NF001567">
    <property type="entry name" value="PRK00389.1"/>
    <property type="match status" value="1"/>
</dbReference>
<dbReference type="PANTHER" id="PTHR43757">
    <property type="entry name" value="AMINOMETHYLTRANSFERASE"/>
    <property type="match status" value="1"/>
</dbReference>
<dbReference type="PANTHER" id="PTHR43757:SF2">
    <property type="entry name" value="AMINOMETHYLTRANSFERASE, MITOCHONDRIAL"/>
    <property type="match status" value="1"/>
</dbReference>
<dbReference type="Pfam" id="PF01571">
    <property type="entry name" value="GCV_T"/>
    <property type="match status" value="1"/>
</dbReference>
<dbReference type="Pfam" id="PF08669">
    <property type="entry name" value="GCV_T_C"/>
    <property type="match status" value="1"/>
</dbReference>
<dbReference type="PIRSF" id="PIRSF006487">
    <property type="entry name" value="GcvT"/>
    <property type="match status" value="1"/>
</dbReference>
<dbReference type="SUPFAM" id="SSF101790">
    <property type="entry name" value="Aminomethyltransferase beta-barrel domain"/>
    <property type="match status" value="1"/>
</dbReference>
<dbReference type="SUPFAM" id="SSF103025">
    <property type="entry name" value="Folate-binding domain"/>
    <property type="match status" value="1"/>
</dbReference>
<comment type="function">
    <text evidence="1">The glycine cleavage system catalyzes the degradation of glycine.</text>
</comment>
<comment type="catalytic activity">
    <reaction evidence="1">
        <text>N(6)-[(R)-S(8)-aminomethyldihydrolipoyl]-L-lysyl-[protein] + (6S)-5,6,7,8-tetrahydrofolate = N(6)-[(R)-dihydrolipoyl]-L-lysyl-[protein] + (6R)-5,10-methylene-5,6,7,8-tetrahydrofolate + NH4(+)</text>
        <dbReference type="Rhea" id="RHEA:16945"/>
        <dbReference type="Rhea" id="RHEA-COMP:10475"/>
        <dbReference type="Rhea" id="RHEA-COMP:10492"/>
        <dbReference type="ChEBI" id="CHEBI:15636"/>
        <dbReference type="ChEBI" id="CHEBI:28938"/>
        <dbReference type="ChEBI" id="CHEBI:57453"/>
        <dbReference type="ChEBI" id="CHEBI:83100"/>
        <dbReference type="ChEBI" id="CHEBI:83143"/>
        <dbReference type="EC" id="2.1.2.10"/>
    </reaction>
</comment>
<comment type="subunit">
    <text evidence="1">The glycine cleavage system is composed of four proteins: P, T, L and H.</text>
</comment>
<comment type="similarity">
    <text evidence="1">Belongs to the GcvT family.</text>
</comment>
<proteinExistence type="inferred from homology"/>